<comment type="function">
    <text evidence="1">Essential cell division protein. May link together the upstream cell division proteins, which are predominantly cytoplasmic, with the downstream cell division proteins, which are predominantly periplasmic. May control correct divisome assembly.</text>
</comment>
<comment type="subunit">
    <text evidence="1">Part of a complex composed of FtsB, FtsL and FtsQ.</text>
</comment>
<comment type="subcellular location">
    <subcellularLocation>
        <location evidence="1">Cell inner membrane</location>
        <topology evidence="1">Single-pass type II membrane protein</topology>
    </subcellularLocation>
    <text evidence="1">Localizes to the division septum.</text>
</comment>
<comment type="similarity">
    <text evidence="1">Belongs to the FtsQ/DivIB family. FtsQ subfamily.</text>
</comment>
<sequence length="273" mass="30288">MWNDARTINLIANTLAVLAVAAMLLAGVAWVAQRPYFTLAAIEIESMPETEMHYVSTGAVRAAIAGRFGGNFFTVDLDEAREAFESVPWVRHATVRRIWPNTLRVRVEEQQPLALWNENQMINTWGEAFTANTGELADDMVLPHFTGPEGTESLVVQRYAELARWFAPLDMHVRELVLNPRYAWAVTLSNGMKLDLGRDPGADAPDPHGLPGALPFAARIQRFVQAWPVVSSRLEGRTVTQADLRYPTGFALALAPLPPEHASHSKSKPAKKR</sequence>
<protein>
    <recommendedName>
        <fullName evidence="1">Cell division protein FtsQ</fullName>
    </recommendedName>
</protein>
<gene>
    <name evidence="1" type="primary">ftsQ</name>
    <name type="ordered locus">BP3020</name>
</gene>
<name>FTSQ_BORPE</name>
<organism>
    <name type="scientific">Bordetella pertussis (strain Tohama I / ATCC BAA-589 / NCTC 13251)</name>
    <dbReference type="NCBI Taxonomy" id="257313"/>
    <lineage>
        <taxon>Bacteria</taxon>
        <taxon>Pseudomonadati</taxon>
        <taxon>Pseudomonadota</taxon>
        <taxon>Betaproteobacteria</taxon>
        <taxon>Burkholderiales</taxon>
        <taxon>Alcaligenaceae</taxon>
        <taxon>Bordetella</taxon>
    </lineage>
</organism>
<keyword id="KW-0131">Cell cycle</keyword>
<keyword id="KW-0132">Cell division</keyword>
<keyword id="KW-0997">Cell inner membrane</keyword>
<keyword id="KW-1003">Cell membrane</keyword>
<keyword id="KW-0472">Membrane</keyword>
<keyword id="KW-1185">Reference proteome</keyword>
<keyword id="KW-0812">Transmembrane</keyword>
<keyword id="KW-1133">Transmembrane helix</keyword>
<evidence type="ECO:0000255" key="1">
    <source>
        <dbReference type="HAMAP-Rule" id="MF_00911"/>
    </source>
</evidence>
<evidence type="ECO:0000255" key="2">
    <source>
        <dbReference type="PROSITE-ProRule" id="PRU01115"/>
    </source>
</evidence>
<feature type="chain" id="PRO_0000414660" description="Cell division protein FtsQ">
    <location>
        <begin position="1"/>
        <end position="273"/>
    </location>
</feature>
<feature type="topological domain" description="Cytoplasmic" evidence="1">
    <location>
        <begin position="1"/>
        <end position="10"/>
    </location>
</feature>
<feature type="transmembrane region" description="Helical" evidence="1">
    <location>
        <begin position="11"/>
        <end position="31"/>
    </location>
</feature>
<feature type="topological domain" description="Periplasmic" evidence="1">
    <location>
        <begin position="32"/>
        <end position="273"/>
    </location>
</feature>
<feature type="domain" description="POTRA" evidence="2">
    <location>
        <begin position="37"/>
        <end position="110"/>
    </location>
</feature>
<dbReference type="EMBL" id="BX640420">
    <property type="protein sequence ID" value="CAE43291.1"/>
    <property type="molecule type" value="Genomic_DNA"/>
</dbReference>
<dbReference type="RefSeq" id="NP_881595.1">
    <property type="nucleotide sequence ID" value="NC_002929.2"/>
</dbReference>
<dbReference type="RefSeq" id="WP_003814570.1">
    <property type="nucleotide sequence ID" value="NZ_CP039022.1"/>
</dbReference>
<dbReference type="SMR" id="Q7VUQ6"/>
<dbReference type="STRING" id="257313.BP3020"/>
<dbReference type="PaxDb" id="257313-BP3020"/>
<dbReference type="KEGG" id="bpe:BP3020"/>
<dbReference type="PATRIC" id="fig|257313.5.peg.3266"/>
<dbReference type="eggNOG" id="COG1589">
    <property type="taxonomic scope" value="Bacteria"/>
</dbReference>
<dbReference type="HOGENOM" id="CLU_064041_0_0_4"/>
<dbReference type="Proteomes" id="UP000002676">
    <property type="component" value="Chromosome"/>
</dbReference>
<dbReference type="GO" id="GO:0032153">
    <property type="term" value="C:cell division site"/>
    <property type="evidence" value="ECO:0007669"/>
    <property type="project" value="UniProtKB-UniRule"/>
</dbReference>
<dbReference type="GO" id="GO:0005886">
    <property type="term" value="C:plasma membrane"/>
    <property type="evidence" value="ECO:0007669"/>
    <property type="project" value="UniProtKB-SubCell"/>
</dbReference>
<dbReference type="GO" id="GO:0090529">
    <property type="term" value="P:cell septum assembly"/>
    <property type="evidence" value="ECO:0007669"/>
    <property type="project" value="InterPro"/>
</dbReference>
<dbReference type="GO" id="GO:0043093">
    <property type="term" value="P:FtsZ-dependent cytokinesis"/>
    <property type="evidence" value="ECO:0007669"/>
    <property type="project" value="UniProtKB-UniRule"/>
</dbReference>
<dbReference type="Gene3D" id="3.40.50.11690">
    <property type="entry name" value="Cell division protein FtsQ/DivIB"/>
    <property type="match status" value="1"/>
</dbReference>
<dbReference type="Gene3D" id="3.10.20.310">
    <property type="entry name" value="membrane protein fhac"/>
    <property type="match status" value="1"/>
</dbReference>
<dbReference type="HAMAP" id="MF_00911">
    <property type="entry name" value="FtsQ_subfam"/>
    <property type="match status" value="1"/>
</dbReference>
<dbReference type="InterPro" id="IPR005548">
    <property type="entry name" value="Cell_div_FtsQ/DivIB_C"/>
</dbReference>
<dbReference type="InterPro" id="IPR026579">
    <property type="entry name" value="FtsQ"/>
</dbReference>
<dbReference type="InterPro" id="IPR045335">
    <property type="entry name" value="FtsQ_C_sf"/>
</dbReference>
<dbReference type="InterPro" id="IPR034746">
    <property type="entry name" value="POTRA"/>
</dbReference>
<dbReference type="InterPro" id="IPR013685">
    <property type="entry name" value="POTRA_FtsQ_type"/>
</dbReference>
<dbReference type="PANTHER" id="PTHR35851">
    <property type="entry name" value="CELL DIVISION PROTEIN FTSQ"/>
    <property type="match status" value="1"/>
</dbReference>
<dbReference type="PANTHER" id="PTHR35851:SF1">
    <property type="entry name" value="CELL DIVISION PROTEIN FTSQ"/>
    <property type="match status" value="1"/>
</dbReference>
<dbReference type="Pfam" id="PF03799">
    <property type="entry name" value="FtsQ_DivIB_C"/>
    <property type="match status" value="1"/>
</dbReference>
<dbReference type="Pfam" id="PF08478">
    <property type="entry name" value="POTRA_1"/>
    <property type="match status" value="1"/>
</dbReference>
<dbReference type="PROSITE" id="PS51779">
    <property type="entry name" value="POTRA"/>
    <property type="match status" value="1"/>
</dbReference>
<accession>Q7VUQ6</accession>
<proteinExistence type="inferred from homology"/>
<reference key="1">
    <citation type="journal article" date="2003" name="Nat. Genet.">
        <title>Comparative analysis of the genome sequences of Bordetella pertussis, Bordetella parapertussis and Bordetella bronchiseptica.</title>
        <authorList>
            <person name="Parkhill J."/>
            <person name="Sebaihia M."/>
            <person name="Preston A."/>
            <person name="Murphy L.D."/>
            <person name="Thomson N.R."/>
            <person name="Harris D.E."/>
            <person name="Holden M.T.G."/>
            <person name="Churcher C.M."/>
            <person name="Bentley S.D."/>
            <person name="Mungall K.L."/>
            <person name="Cerdeno-Tarraga A.-M."/>
            <person name="Temple L."/>
            <person name="James K.D."/>
            <person name="Harris B."/>
            <person name="Quail M.A."/>
            <person name="Achtman M."/>
            <person name="Atkin R."/>
            <person name="Baker S."/>
            <person name="Basham D."/>
            <person name="Bason N."/>
            <person name="Cherevach I."/>
            <person name="Chillingworth T."/>
            <person name="Collins M."/>
            <person name="Cronin A."/>
            <person name="Davis P."/>
            <person name="Doggett J."/>
            <person name="Feltwell T."/>
            <person name="Goble A."/>
            <person name="Hamlin N."/>
            <person name="Hauser H."/>
            <person name="Holroyd S."/>
            <person name="Jagels K."/>
            <person name="Leather S."/>
            <person name="Moule S."/>
            <person name="Norberczak H."/>
            <person name="O'Neil S."/>
            <person name="Ormond D."/>
            <person name="Price C."/>
            <person name="Rabbinowitsch E."/>
            <person name="Rutter S."/>
            <person name="Sanders M."/>
            <person name="Saunders D."/>
            <person name="Seeger K."/>
            <person name="Sharp S."/>
            <person name="Simmonds M."/>
            <person name="Skelton J."/>
            <person name="Squares R."/>
            <person name="Squares S."/>
            <person name="Stevens K."/>
            <person name="Unwin L."/>
            <person name="Whitehead S."/>
            <person name="Barrell B.G."/>
            <person name="Maskell D.J."/>
        </authorList>
    </citation>
    <scope>NUCLEOTIDE SEQUENCE [LARGE SCALE GENOMIC DNA]</scope>
    <source>
        <strain>Tohama I / ATCC BAA-589 / NCTC 13251</strain>
    </source>
</reference>